<proteinExistence type="inferred from homology"/>
<comment type="function">
    <text evidence="1">One of the components of the core complex of photosystem II (PSII), required for its stability and/or assembly. PSII is a light-driven water:plastoquinone oxidoreductase that uses light energy to abstract electrons from H(2)O, generating O(2) and a proton gradient subsequently used for ATP formation. It consists of a core antenna complex that captures photons, and an electron transfer chain that converts photonic excitation into a charge separation.</text>
</comment>
<comment type="subunit">
    <text evidence="1">PSII is composed of 1 copy each of membrane proteins PsbA, PsbB, PsbC, PsbD, PsbE, PsbF, PsbH, PsbI, PsbJ, PsbK, PsbL, PsbM, PsbT, PsbX, PsbY, PsbZ, Psb30/Ycf12, at least 3 peripheral proteins of the oxygen-evolving complex and a large number of cofactors. It forms dimeric complexes.</text>
</comment>
<comment type="subcellular location">
    <subcellularLocation>
        <location evidence="1">Plastid</location>
        <location evidence="1">Chloroplast thylakoid membrane</location>
        <topology evidence="1">Single-pass membrane protein</topology>
    </subcellularLocation>
</comment>
<comment type="similarity">
    <text evidence="1">Belongs to the PsbI family.</text>
</comment>
<reference key="1">
    <citation type="journal article" date="2006" name="Mol. Genet. Genomics">
        <title>Distinctive architecture of the chloroplast genome in the chlorophycean green alga Stigeoclonium helveticum.</title>
        <authorList>
            <person name="Belanger A.-S."/>
            <person name="Brouard J.-S."/>
            <person name="Charlebois P."/>
            <person name="Otis C."/>
            <person name="Lemieux C."/>
            <person name="Turmel M."/>
        </authorList>
    </citation>
    <scope>NUCLEOTIDE SEQUENCE [LARGE SCALE GENOMIC DNA]</scope>
    <source>
        <strain>UTEX 441</strain>
    </source>
</reference>
<gene>
    <name evidence="1" type="primary">psbI</name>
</gene>
<dbReference type="EMBL" id="DQ630521">
    <property type="protein sequence ID" value="ABF60173.1"/>
    <property type="molecule type" value="Genomic_DNA"/>
</dbReference>
<dbReference type="RefSeq" id="YP_764424.1">
    <property type="nucleotide sequence ID" value="NC_008372.1"/>
</dbReference>
<dbReference type="SMR" id="Q06SE2"/>
<dbReference type="GeneID" id="4308416"/>
<dbReference type="GO" id="GO:0009535">
    <property type="term" value="C:chloroplast thylakoid membrane"/>
    <property type="evidence" value="ECO:0007669"/>
    <property type="project" value="UniProtKB-SubCell"/>
</dbReference>
<dbReference type="GO" id="GO:0009539">
    <property type="term" value="C:photosystem II reaction center"/>
    <property type="evidence" value="ECO:0007669"/>
    <property type="project" value="InterPro"/>
</dbReference>
<dbReference type="GO" id="GO:0015979">
    <property type="term" value="P:photosynthesis"/>
    <property type="evidence" value="ECO:0007669"/>
    <property type="project" value="UniProtKB-UniRule"/>
</dbReference>
<dbReference type="HAMAP" id="MF_01316">
    <property type="entry name" value="PSII_PsbI"/>
    <property type="match status" value="1"/>
</dbReference>
<dbReference type="InterPro" id="IPR003686">
    <property type="entry name" value="PSII_PsbI"/>
</dbReference>
<dbReference type="InterPro" id="IPR037271">
    <property type="entry name" value="PSII_PsbI_sf"/>
</dbReference>
<dbReference type="NCBIfam" id="NF002735">
    <property type="entry name" value="PRK02655.1"/>
    <property type="match status" value="1"/>
</dbReference>
<dbReference type="PANTHER" id="PTHR35772">
    <property type="entry name" value="PHOTOSYSTEM II REACTION CENTER PROTEIN I"/>
    <property type="match status" value="1"/>
</dbReference>
<dbReference type="PANTHER" id="PTHR35772:SF1">
    <property type="entry name" value="PHOTOSYSTEM II REACTION CENTER PROTEIN I"/>
    <property type="match status" value="1"/>
</dbReference>
<dbReference type="Pfam" id="PF02532">
    <property type="entry name" value="PsbI"/>
    <property type="match status" value="1"/>
</dbReference>
<dbReference type="SUPFAM" id="SSF161041">
    <property type="entry name" value="Photosystem II reaction center protein I, PsbI"/>
    <property type="match status" value="1"/>
</dbReference>
<evidence type="ECO:0000255" key="1">
    <source>
        <dbReference type="HAMAP-Rule" id="MF_01316"/>
    </source>
</evidence>
<protein>
    <recommendedName>
        <fullName evidence="1">Photosystem II reaction center protein I</fullName>
        <shortName evidence="1">PSII-I</shortName>
    </recommendedName>
    <alternativeName>
        <fullName evidence="1">PSII 4.8 kDa protein</fullName>
    </alternativeName>
</protein>
<accession>Q06SE2</accession>
<sequence length="37" mass="4258">MLTLKIFVYTVVTFFVCLFVFGFLSNDPGRNPGKRDD</sequence>
<organism>
    <name type="scientific">Stigeoclonium helveticum</name>
    <name type="common">Green alga</name>
    <dbReference type="NCBI Taxonomy" id="55999"/>
    <lineage>
        <taxon>Eukaryota</taxon>
        <taxon>Viridiplantae</taxon>
        <taxon>Chlorophyta</taxon>
        <taxon>core chlorophytes</taxon>
        <taxon>Chlorophyceae</taxon>
        <taxon>OCC clade</taxon>
        <taxon>Chaetophorales</taxon>
        <taxon>Chaetophoraceae</taxon>
        <taxon>Stigeoclonium</taxon>
    </lineage>
</organism>
<name>PSBI_STIHE</name>
<keyword id="KW-0150">Chloroplast</keyword>
<keyword id="KW-0472">Membrane</keyword>
<keyword id="KW-0602">Photosynthesis</keyword>
<keyword id="KW-0604">Photosystem II</keyword>
<keyword id="KW-0934">Plastid</keyword>
<keyword id="KW-0674">Reaction center</keyword>
<keyword id="KW-0793">Thylakoid</keyword>
<keyword id="KW-0812">Transmembrane</keyword>
<keyword id="KW-1133">Transmembrane helix</keyword>
<feature type="chain" id="PRO_0000275814" description="Photosystem II reaction center protein I">
    <location>
        <begin position="1"/>
        <end position="37"/>
    </location>
</feature>
<feature type="transmembrane region" description="Helical" evidence="1">
    <location>
        <begin position="4"/>
        <end position="24"/>
    </location>
</feature>
<geneLocation type="chloroplast"/>